<organism>
    <name type="scientific">Alkalilimnicola ehrlichii (strain ATCC BAA-1101 / DSM 17681 / MLHE-1)</name>
    <dbReference type="NCBI Taxonomy" id="187272"/>
    <lineage>
        <taxon>Bacteria</taxon>
        <taxon>Pseudomonadati</taxon>
        <taxon>Pseudomonadota</taxon>
        <taxon>Gammaproteobacteria</taxon>
        <taxon>Chromatiales</taxon>
        <taxon>Ectothiorhodospiraceae</taxon>
        <taxon>Alkalilimnicola</taxon>
    </lineage>
</organism>
<feature type="chain" id="PRO_0000298478" description="NADH-quinone oxidoreductase subunit I">
    <location>
        <begin position="1"/>
        <end position="163"/>
    </location>
</feature>
<feature type="domain" description="4Fe-4S ferredoxin-type 1" evidence="1">
    <location>
        <begin position="53"/>
        <end position="83"/>
    </location>
</feature>
<feature type="domain" description="4Fe-4S ferredoxin-type 2" evidence="1">
    <location>
        <begin position="94"/>
        <end position="123"/>
    </location>
</feature>
<feature type="binding site" evidence="1">
    <location>
        <position position="63"/>
    </location>
    <ligand>
        <name>[4Fe-4S] cluster</name>
        <dbReference type="ChEBI" id="CHEBI:49883"/>
        <label>1</label>
    </ligand>
</feature>
<feature type="binding site" evidence="1">
    <location>
        <position position="66"/>
    </location>
    <ligand>
        <name>[4Fe-4S] cluster</name>
        <dbReference type="ChEBI" id="CHEBI:49883"/>
        <label>1</label>
    </ligand>
</feature>
<feature type="binding site" evidence="1">
    <location>
        <position position="69"/>
    </location>
    <ligand>
        <name>[4Fe-4S] cluster</name>
        <dbReference type="ChEBI" id="CHEBI:49883"/>
        <label>1</label>
    </ligand>
</feature>
<feature type="binding site" evidence="1">
    <location>
        <position position="73"/>
    </location>
    <ligand>
        <name>[4Fe-4S] cluster</name>
        <dbReference type="ChEBI" id="CHEBI:49883"/>
        <label>2</label>
    </ligand>
</feature>
<feature type="binding site" evidence="1">
    <location>
        <position position="103"/>
    </location>
    <ligand>
        <name>[4Fe-4S] cluster</name>
        <dbReference type="ChEBI" id="CHEBI:49883"/>
        <label>2</label>
    </ligand>
</feature>
<feature type="binding site" evidence="1">
    <location>
        <position position="106"/>
    </location>
    <ligand>
        <name>[4Fe-4S] cluster</name>
        <dbReference type="ChEBI" id="CHEBI:49883"/>
        <label>2</label>
    </ligand>
</feature>
<feature type="binding site" evidence="1">
    <location>
        <position position="109"/>
    </location>
    <ligand>
        <name>[4Fe-4S] cluster</name>
        <dbReference type="ChEBI" id="CHEBI:49883"/>
        <label>2</label>
    </ligand>
</feature>
<feature type="binding site" evidence="1">
    <location>
        <position position="113"/>
    </location>
    <ligand>
        <name>[4Fe-4S] cluster</name>
        <dbReference type="ChEBI" id="CHEBI:49883"/>
        <label>1</label>
    </ligand>
</feature>
<gene>
    <name evidence="1" type="primary">nuoI</name>
    <name type="ordered locus">Mlg_1962</name>
</gene>
<evidence type="ECO:0000255" key="1">
    <source>
        <dbReference type="HAMAP-Rule" id="MF_01351"/>
    </source>
</evidence>
<reference key="1">
    <citation type="submission" date="2006-08" db="EMBL/GenBank/DDBJ databases">
        <title>Complete sequence of Alkalilimnicola ehrilichei MLHE-1.</title>
        <authorList>
            <person name="Copeland A."/>
            <person name="Lucas S."/>
            <person name="Lapidus A."/>
            <person name="Barry K."/>
            <person name="Detter J.C."/>
            <person name="Glavina del Rio T."/>
            <person name="Hammon N."/>
            <person name="Israni S."/>
            <person name="Dalin E."/>
            <person name="Tice H."/>
            <person name="Pitluck S."/>
            <person name="Sims D."/>
            <person name="Brettin T."/>
            <person name="Bruce D."/>
            <person name="Han C."/>
            <person name="Tapia R."/>
            <person name="Gilna P."/>
            <person name="Schmutz J."/>
            <person name="Larimer F."/>
            <person name="Land M."/>
            <person name="Hauser L."/>
            <person name="Kyrpides N."/>
            <person name="Mikhailova N."/>
            <person name="Oremland R.S."/>
            <person name="Hoeft S.E."/>
            <person name="Switzer-Blum J."/>
            <person name="Kulp T."/>
            <person name="King G."/>
            <person name="Tabita R."/>
            <person name="Witte B."/>
            <person name="Santini J.M."/>
            <person name="Basu P."/>
            <person name="Hollibaugh J.T."/>
            <person name="Xie G."/>
            <person name="Stolz J.F."/>
            <person name="Richardson P."/>
        </authorList>
    </citation>
    <scope>NUCLEOTIDE SEQUENCE [LARGE SCALE GENOMIC DNA]</scope>
    <source>
        <strain>ATCC BAA-1101 / DSM 17681 / MLHE-1</strain>
    </source>
</reference>
<proteinExistence type="inferred from homology"/>
<accession>Q0A783</accession>
<dbReference type="EC" id="7.1.1.-" evidence="1"/>
<dbReference type="EMBL" id="CP000453">
    <property type="protein sequence ID" value="ABI57304.1"/>
    <property type="molecule type" value="Genomic_DNA"/>
</dbReference>
<dbReference type="RefSeq" id="WP_011629698.1">
    <property type="nucleotide sequence ID" value="NC_008340.1"/>
</dbReference>
<dbReference type="SMR" id="Q0A783"/>
<dbReference type="KEGG" id="aeh:Mlg_1962"/>
<dbReference type="eggNOG" id="COG1143">
    <property type="taxonomic scope" value="Bacteria"/>
</dbReference>
<dbReference type="HOGENOM" id="CLU_067218_5_1_6"/>
<dbReference type="OrthoDB" id="9808559at2"/>
<dbReference type="Proteomes" id="UP000001962">
    <property type="component" value="Chromosome"/>
</dbReference>
<dbReference type="GO" id="GO:0005886">
    <property type="term" value="C:plasma membrane"/>
    <property type="evidence" value="ECO:0007669"/>
    <property type="project" value="UniProtKB-SubCell"/>
</dbReference>
<dbReference type="GO" id="GO:0051539">
    <property type="term" value="F:4 iron, 4 sulfur cluster binding"/>
    <property type="evidence" value="ECO:0007669"/>
    <property type="project" value="UniProtKB-KW"/>
</dbReference>
<dbReference type="GO" id="GO:0005506">
    <property type="term" value="F:iron ion binding"/>
    <property type="evidence" value="ECO:0007669"/>
    <property type="project" value="UniProtKB-UniRule"/>
</dbReference>
<dbReference type="GO" id="GO:0050136">
    <property type="term" value="F:NADH:ubiquinone reductase (non-electrogenic) activity"/>
    <property type="evidence" value="ECO:0007669"/>
    <property type="project" value="UniProtKB-UniRule"/>
</dbReference>
<dbReference type="GO" id="GO:0048038">
    <property type="term" value="F:quinone binding"/>
    <property type="evidence" value="ECO:0007669"/>
    <property type="project" value="UniProtKB-KW"/>
</dbReference>
<dbReference type="GO" id="GO:0009060">
    <property type="term" value="P:aerobic respiration"/>
    <property type="evidence" value="ECO:0007669"/>
    <property type="project" value="TreeGrafter"/>
</dbReference>
<dbReference type="FunFam" id="3.30.70.3270:FF:000003">
    <property type="entry name" value="NADH-quinone oxidoreductase subunit I"/>
    <property type="match status" value="1"/>
</dbReference>
<dbReference type="Gene3D" id="3.30.70.3270">
    <property type="match status" value="1"/>
</dbReference>
<dbReference type="HAMAP" id="MF_01351">
    <property type="entry name" value="NDH1_NuoI"/>
    <property type="match status" value="1"/>
</dbReference>
<dbReference type="InterPro" id="IPR017896">
    <property type="entry name" value="4Fe4S_Fe-S-bd"/>
</dbReference>
<dbReference type="InterPro" id="IPR017900">
    <property type="entry name" value="4Fe4S_Fe_S_CS"/>
</dbReference>
<dbReference type="InterPro" id="IPR010226">
    <property type="entry name" value="NADH_quinone_OxRdtase_chainI"/>
</dbReference>
<dbReference type="NCBIfam" id="TIGR01971">
    <property type="entry name" value="NuoI"/>
    <property type="match status" value="1"/>
</dbReference>
<dbReference type="NCBIfam" id="NF004538">
    <property type="entry name" value="PRK05888.1-4"/>
    <property type="match status" value="1"/>
</dbReference>
<dbReference type="NCBIfam" id="NF004539">
    <property type="entry name" value="PRK05888.1-5"/>
    <property type="match status" value="1"/>
</dbReference>
<dbReference type="PANTHER" id="PTHR10849:SF20">
    <property type="entry name" value="NADH DEHYDROGENASE [UBIQUINONE] IRON-SULFUR PROTEIN 8, MITOCHONDRIAL"/>
    <property type="match status" value="1"/>
</dbReference>
<dbReference type="PANTHER" id="PTHR10849">
    <property type="entry name" value="NADH DEHYDROGENASE UBIQUINONE IRON-SULFUR PROTEIN 8, MITOCHONDRIAL"/>
    <property type="match status" value="1"/>
</dbReference>
<dbReference type="Pfam" id="PF12838">
    <property type="entry name" value="Fer4_7"/>
    <property type="match status" value="1"/>
</dbReference>
<dbReference type="SUPFAM" id="SSF54862">
    <property type="entry name" value="4Fe-4S ferredoxins"/>
    <property type="match status" value="1"/>
</dbReference>
<dbReference type="PROSITE" id="PS00198">
    <property type="entry name" value="4FE4S_FER_1"/>
    <property type="match status" value="2"/>
</dbReference>
<dbReference type="PROSITE" id="PS51379">
    <property type="entry name" value="4FE4S_FER_2"/>
    <property type="match status" value="2"/>
</dbReference>
<sequence length="163" mass="18811">MTALRDYVKSFLLVELLQGLRLTGKHFLSRSVTLEYPEEKTPKSPRFRGMHALRRYPNGEERCIACKLCEAVCPALAITIEAGPREDDGTRRTTLYEIDMFKCIYCGFCEESCPVDSIVETREHEYHMEHREERVFDKARLLANGDKYEAQIAADRAADAPYR</sequence>
<comment type="function">
    <text evidence="1">NDH-1 shuttles electrons from NADH, via FMN and iron-sulfur (Fe-S) centers, to quinones in the respiratory chain. The immediate electron acceptor for the enzyme in this species is believed to be ubiquinone. Couples the redox reaction to proton translocation (for every two electrons transferred, four hydrogen ions are translocated across the cytoplasmic membrane), and thus conserves the redox energy in a proton gradient.</text>
</comment>
<comment type="catalytic activity">
    <reaction evidence="1">
        <text>a quinone + NADH + 5 H(+)(in) = a quinol + NAD(+) + 4 H(+)(out)</text>
        <dbReference type="Rhea" id="RHEA:57888"/>
        <dbReference type="ChEBI" id="CHEBI:15378"/>
        <dbReference type="ChEBI" id="CHEBI:24646"/>
        <dbReference type="ChEBI" id="CHEBI:57540"/>
        <dbReference type="ChEBI" id="CHEBI:57945"/>
        <dbReference type="ChEBI" id="CHEBI:132124"/>
    </reaction>
</comment>
<comment type="cofactor">
    <cofactor evidence="1">
        <name>[4Fe-4S] cluster</name>
        <dbReference type="ChEBI" id="CHEBI:49883"/>
    </cofactor>
    <text evidence="1">Binds 2 [4Fe-4S] clusters per subunit.</text>
</comment>
<comment type="subunit">
    <text evidence="1">NDH-1 is composed of 14 different subunits. Subunits NuoA, H, J, K, L, M, N constitute the membrane sector of the complex.</text>
</comment>
<comment type="subcellular location">
    <subcellularLocation>
        <location evidence="1">Cell inner membrane</location>
        <topology evidence="1">Peripheral membrane protein</topology>
    </subcellularLocation>
</comment>
<comment type="similarity">
    <text evidence="1">Belongs to the complex I 23 kDa subunit family.</text>
</comment>
<keyword id="KW-0004">4Fe-4S</keyword>
<keyword id="KW-0997">Cell inner membrane</keyword>
<keyword id="KW-1003">Cell membrane</keyword>
<keyword id="KW-0408">Iron</keyword>
<keyword id="KW-0411">Iron-sulfur</keyword>
<keyword id="KW-0472">Membrane</keyword>
<keyword id="KW-0479">Metal-binding</keyword>
<keyword id="KW-0520">NAD</keyword>
<keyword id="KW-0874">Quinone</keyword>
<keyword id="KW-1185">Reference proteome</keyword>
<keyword id="KW-0677">Repeat</keyword>
<keyword id="KW-1278">Translocase</keyword>
<keyword id="KW-0830">Ubiquinone</keyword>
<protein>
    <recommendedName>
        <fullName evidence="1">NADH-quinone oxidoreductase subunit I</fullName>
        <ecNumber evidence="1">7.1.1.-</ecNumber>
    </recommendedName>
    <alternativeName>
        <fullName evidence="1">NADH dehydrogenase I subunit I</fullName>
    </alternativeName>
    <alternativeName>
        <fullName evidence="1">NDH-1 subunit I</fullName>
    </alternativeName>
</protein>
<name>NUOI_ALKEH</name>